<organism>
    <name type="scientific">Shigella flexneri</name>
    <dbReference type="NCBI Taxonomy" id="623"/>
    <lineage>
        <taxon>Bacteria</taxon>
        <taxon>Pseudomonadati</taxon>
        <taxon>Pseudomonadota</taxon>
        <taxon>Gammaproteobacteria</taxon>
        <taxon>Enterobacterales</taxon>
        <taxon>Enterobacteriaceae</taxon>
        <taxon>Shigella</taxon>
    </lineage>
</organism>
<sequence>MKYDTSELCDIYQEDVNVVEPLFSNFGGRASFGGQIITVKCFEDNGLLYDLLEQNGRGRVLVVDGGGSVRRALVDAELARLAVQNEWEGLVIYGAVRQVDDLEELDIGIQAMAAIPVGAAGEGIGESDVRVNFGGVTFFSGDHLYADNTGIILSEDPLDIE</sequence>
<proteinExistence type="inferred from homology"/>
<feature type="chain" id="PRO_0000209638" description="Regulator of ribonuclease activity A">
    <location>
        <begin position="1"/>
        <end position="161"/>
    </location>
</feature>
<protein>
    <recommendedName>
        <fullName evidence="1">Regulator of ribonuclease activity A</fullName>
    </recommendedName>
</protein>
<dbReference type="EMBL" id="AE005674">
    <property type="protein sequence ID" value="AAN45440.1"/>
    <property type="molecule type" value="Genomic_DNA"/>
</dbReference>
<dbReference type="EMBL" id="AE014073">
    <property type="protein sequence ID" value="AAP18760.1"/>
    <property type="molecule type" value="Genomic_DNA"/>
</dbReference>
<dbReference type="RefSeq" id="NP_709733.1">
    <property type="nucleotide sequence ID" value="NC_004337.2"/>
</dbReference>
<dbReference type="RefSeq" id="WP_000872908.1">
    <property type="nucleotide sequence ID" value="NZ_WPGW01000012.1"/>
</dbReference>
<dbReference type="SMR" id="P0A8R3"/>
<dbReference type="STRING" id="198214.SF4007"/>
<dbReference type="PaxDb" id="198214-SF4007"/>
<dbReference type="GeneID" id="1026926"/>
<dbReference type="GeneID" id="93777969"/>
<dbReference type="KEGG" id="sfl:SF4007"/>
<dbReference type="KEGG" id="sfx:S3740"/>
<dbReference type="PATRIC" id="fig|198214.7.peg.4722"/>
<dbReference type="HOGENOM" id="CLU_072626_4_0_6"/>
<dbReference type="Proteomes" id="UP000001006">
    <property type="component" value="Chromosome"/>
</dbReference>
<dbReference type="Proteomes" id="UP000002673">
    <property type="component" value="Chromosome"/>
</dbReference>
<dbReference type="GO" id="GO:0005829">
    <property type="term" value="C:cytosol"/>
    <property type="evidence" value="ECO:0007669"/>
    <property type="project" value="TreeGrafter"/>
</dbReference>
<dbReference type="GO" id="GO:0060698">
    <property type="term" value="F:endoribonuclease inhibitor activity"/>
    <property type="evidence" value="ECO:0007669"/>
    <property type="project" value="UniProtKB-UniRule"/>
</dbReference>
<dbReference type="GO" id="GO:0019899">
    <property type="term" value="F:enzyme binding"/>
    <property type="evidence" value="ECO:0007669"/>
    <property type="project" value="UniProtKB-UniRule"/>
</dbReference>
<dbReference type="GO" id="GO:1902369">
    <property type="term" value="P:negative regulation of RNA catabolic process"/>
    <property type="evidence" value="ECO:0007669"/>
    <property type="project" value="TreeGrafter"/>
</dbReference>
<dbReference type="CDD" id="cd16841">
    <property type="entry name" value="RraA_family"/>
    <property type="match status" value="1"/>
</dbReference>
<dbReference type="FunFam" id="3.50.30.40:FF:000001">
    <property type="entry name" value="Regulator of ribonuclease activity A"/>
    <property type="match status" value="1"/>
</dbReference>
<dbReference type="Gene3D" id="3.50.30.40">
    <property type="entry name" value="Ribonuclease E inhibitor RraA/RraA-like"/>
    <property type="match status" value="1"/>
</dbReference>
<dbReference type="HAMAP" id="MF_00471">
    <property type="entry name" value="RraA"/>
    <property type="match status" value="1"/>
</dbReference>
<dbReference type="InterPro" id="IPR010203">
    <property type="entry name" value="RraA"/>
</dbReference>
<dbReference type="InterPro" id="IPR005493">
    <property type="entry name" value="RraA/RraA-like"/>
</dbReference>
<dbReference type="InterPro" id="IPR036704">
    <property type="entry name" value="RraA/RraA-like_sf"/>
</dbReference>
<dbReference type="InterPro" id="IPR014339">
    <property type="entry name" value="RraA_gpbac"/>
</dbReference>
<dbReference type="NCBIfam" id="TIGR01935">
    <property type="entry name" value="NOT-MenG"/>
    <property type="match status" value="1"/>
</dbReference>
<dbReference type="NCBIfam" id="NF006875">
    <property type="entry name" value="PRK09372.1"/>
    <property type="match status" value="1"/>
</dbReference>
<dbReference type="NCBIfam" id="TIGR02998">
    <property type="entry name" value="RraA_entero"/>
    <property type="match status" value="1"/>
</dbReference>
<dbReference type="PANTHER" id="PTHR33254">
    <property type="entry name" value="4-HYDROXY-4-METHYL-2-OXOGLUTARATE ALDOLASE 3-RELATED"/>
    <property type="match status" value="1"/>
</dbReference>
<dbReference type="PANTHER" id="PTHR33254:SF29">
    <property type="entry name" value="REGULATOR OF RIBONUCLEASE ACTIVITY A"/>
    <property type="match status" value="1"/>
</dbReference>
<dbReference type="Pfam" id="PF03737">
    <property type="entry name" value="RraA-like"/>
    <property type="match status" value="1"/>
</dbReference>
<dbReference type="SUPFAM" id="SSF89562">
    <property type="entry name" value="RraA-like"/>
    <property type="match status" value="1"/>
</dbReference>
<accession>P0A8R3</accession>
<accession>P32165</accession>
<name>RRAA_SHIFL</name>
<keyword id="KW-0963">Cytoplasm</keyword>
<keyword id="KW-1185">Reference proteome</keyword>
<reference key="1">
    <citation type="journal article" date="2002" name="Nucleic Acids Res.">
        <title>Genome sequence of Shigella flexneri 2a: insights into pathogenicity through comparison with genomes of Escherichia coli K12 and O157.</title>
        <authorList>
            <person name="Jin Q."/>
            <person name="Yuan Z."/>
            <person name="Xu J."/>
            <person name="Wang Y."/>
            <person name="Shen Y."/>
            <person name="Lu W."/>
            <person name="Wang J."/>
            <person name="Liu H."/>
            <person name="Yang J."/>
            <person name="Yang F."/>
            <person name="Zhang X."/>
            <person name="Zhang J."/>
            <person name="Yang G."/>
            <person name="Wu H."/>
            <person name="Qu D."/>
            <person name="Dong J."/>
            <person name="Sun L."/>
            <person name="Xue Y."/>
            <person name="Zhao A."/>
            <person name="Gao Y."/>
            <person name="Zhu J."/>
            <person name="Kan B."/>
            <person name="Ding K."/>
            <person name="Chen S."/>
            <person name="Cheng H."/>
            <person name="Yao Z."/>
            <person name="He B."/>
            <person name="Chen R."/>
            <person name="Ma D."/>
            <person name="Qiang B."/>
            <person name="Wen Y."/>
            <person name="Hou Y."/>
            <person name="Yu J."/>
        </authorList>
    </citation>
    <scope>NUCLEOTIDE SEQUENCE [LARGE SCALE GENOMIC DNA]</scope>
    <source>
        <strain>301 / Serotype 2a</strain>
    </source>
</reference>
<reference key="2">
    <citation type="journal article" date="2003" name="Infect. Immun.">
        <title>Complete genome sequence and comparative genomics of Shigella flexneri serotype 2a strain 2457T.</title>
        <authorList>
            <person name="Wei J."/>
            <person name="Goldberg M.B."/>
            <person name="Burland V."/>
            <person name="Venkatesan M.M."/>
            <person name="Deng W."/>
            <person name="Fournier G."/>
            <person name="Mayhew G.F."/>
            <person name="Plunkett G. III"/>
            <person name="Rose D.J."/>
            <person name="Darling A."/>
            <person name="Mau B."/>
            <person name="Perna N.T."/>
            <person name="Payne S.M."/>
            <person name="Runyen-Janecky L.J."/>
            <person name="Zhou S."/>
            <person name="Schwartz D.C."/>
            <person name="Blattner F.R."/>
        </authorList>
    </citation>
    <scope>NUCLEOTIDE SEQUENCE [LARGE SCALE GENOMIC DNA]</scope>
    <source>
        <strain>ATCC 700930 / 2457T / Serotype 2a</strain>
    </source>
</reference>
<gene>
    <name evidence="1" type="primary">rraA</name>
    <name type="synonym">menG</name>
    <name type="ordered locus">SF4007</name>
    <name type="ordered locus">S3740</name>
</gene>
<evidence type="ECO:0000255" key="1">
    <source>
        <dbReference type="HAMAP-Rule" id="MF_00471"/>
    </source>
</evidence>
<comment type="function">
    <text evidence="1">Globally modulates RNA abundance by binding to RNase E (Rne) and regulating its endonucleolytic activity. Can modulate Rne action in a substrate-dependent manner by altering the composition of the degradosome. Modulates RNA-binding and helicase activities of the degradosome.</text>
</comment>
<comment type="subunit">
    <text evidence="1">Homotrimer. Binds to both RNA-binding sites in the C-terminal region of Rne and to RhlB.</text>
</comment>
<comment type="subcellular location">
    <subcellularLocation>
        <location evidence="1">Cytoplasm</location>
    </subcellularLocation>
</comment>
<comment type="similarity">
    <text evidence="1">Belongs to the RraA family.</text>
</comment>